<reference key="1">
    <citation type="journal article" date="1996" name="Science">
        <title>Complete genome sequence of the methanogenic archaeon, Methanococcus jannaschii.</title>
        <authorList>
            <person name="Bult C.J."/>
            <person name="White O."/>
            <person name="Olsen G.J."/>
            <person name="Zhou L."/>
            <person name="Fleischmann R.D."/>
            <person name="Sutton G.G."/>
            <person name="Blake J.A."/>
            <person name="FitzGerald L.M."/>
            <person name="Clayton R.A."/>
            <person name="Gocayne J.D."/>
            <person name="Kerlavage A.R."/>
            <person name="Dougherty B.A."/>
            <person name="Tomb J.-F."/>
            <person name="Adams M.D."/>
            <person name="Reich C.I."/>
            <person name="Overbeek R."/>
            <person name="Kirkness E.F."/>
            <person name="Weinstock K.G."/>
            <person name="Merrick J.M."/>
            <person name="Glodek A."/>
            <person name="Scott J.L."/>
            <person name="Geoghagen N.S.M."/>
            <person name="Weidman J.F."/>
            <person name="Fuhrmann J.L."/>
            <person name="Nguyen D."/>
            <person name="Utterback T.R."/>
            <person name="Kelley J.M."/>
            <person name="Peterson J.D."/>
            <person name="Sadow P.W."/>
            <person name="Hanna M.C."/>
            <person name="Cotton M.D."/>
            <person name="Roberts K.M."/>
            <person name="Hurst M.A."/>
            <person name="Kaine B.P."/>
            <person name="Borodovsky M."/>
            <person name="Klenk H.-P."/>
            <person name="Fraser C.M."/>
            <person name="Smith H.O."/>
            <person name="Woese C.R."/>
            <person name="Venter J.C."/>
        </authorList>
    </citation>
    <scope>NUCLEOTIDE SEQUENCE [LARGE SCALE GENOMIC DNA]</scope>
    <source>
        <strain>ATCC 43067 / DSM 2661 / JAL-1 / JCM 10045 / NBRC 100440</strain>
    </source>
</reference>
<feature type="chain" id="PRO_0000138507" description="UPF0145 protein MJ1170">
    <location>
        <begin position="1"/>
        <end position="89"/>
    </location>
</feature>
<name>Y1170_METJA</name>
<gene>
    <name type="ordered locus">MJ1170</name>
</gene>
<proteinExistence type="inferred from homology"/>
<keyword id="KW-1185">Reference proteome</keyword>
<dbReference type="EMBL" id="L77117">
    <property type="protein sequence ID" value="AAB99172.1"/>
    <property type="molecule type" value="Genomic_DNA"/>
</dbReference>
<dbReference type="PIR" id="A64446">
    <property type="entry name" value="A64446"/>
</dbReference>
<dbReference type="SMR" id="Q58570"/>
<dbReference type="STRING" id="243232.MJ_1170"/>
<dbReference type="PaxDb" id="243232-MJ_1170"/>
<dbReference type="EnsemblBacteria" id="AAB99172">
    <property type="protein sequence ID" value="AAB99172"/>
    <property type="gene ID" value="MJ_1170"/>
</dbReference>
<dbReference type="KEGG" id="mja:MJ_1170"/>
<dbReference type="eggNOG" id="arCOG02287">
    <property type="taxonomic scope" value="Archaea"/>
</dbReference>
<dbReference type="HOGENOM" id="CLU_2461821_0_0_2"/>
<dbReference type="InParanoid" id="Q58570"/>
<dbReference type="Proteomes" id="UP000000805">
    <property type="component" value="Chromosome"/>
</dbReference>
<dbReference type="Gene3D" id="3.30.110.70">
    <property type="entry name" value="Hypothetical protein apc22750. Chain B"/>
    <property type="match status" value="1"/>
</dbReference>
<dbReference type="InterPro" id="IPR035439">
    <property type="entry name" value="UPF0145_dom_sf"/>
</dbReference>
<dbReference type="InterPro" id="IPR002765">
    <property type="entry name" value="UPF0145_YbjQ-like"/>
</dbReference>
<dbReference type="PANTHER" id="PTHR34068">
    <property type="entry name" value="UPF0145 PROTEIN YBJQ"/>
    <property type="match status" value="1"/>
</dbReference>
<dbReference type="PANTHER" id="PTHR34068:SF1">
    <property type="entry name" value="UPF0145 PROTEIN YBJQ"/>
    <property type="match status" value="1"/>
</dbReference>
<dbReference type="Pfam" id="PF01906">
    <property type="entry name" value="YbjQ_1"/>
    <property type="match status" value="1"/>
</dbReference>
<dbReference type="SUPFAM" id="SSF117782">
    <property type="entry name" value="YbjQ-like"/>
    <property type="match status" value="1"/>
</dbReference>
<organism>
    <name type="scientific">Methanocaldococcus jannaschii (strain ATCC 43067 / DSM 2661 / JAL-1 / JCM 10045 / NBRC 100440)</name>
    <name type="common">Methanococcus jannaschii</name>
    <dbReference type="NCBI Taxonomy" id="243232"/>
    <lineage>
        <taxon>Archaea</taxon>
        <taxon>Methanobacteriati</taxon>
        <taxon>Methanobacteriota</taxon>
        <taxon>Methanomada group</taxon>
        <taxon>Methanococci</taxon>
        <taxon>Methanococcales</taxon>
        <taxon>Methanocaldococcaceae</taxon>
        <taxon>Methanocaldococcus</taxon>
    </lineage>
</organism>
<protein>
    <recommendedName>
        <fullName>UPF0145 protein MJ1170</fullName>
    </recommendedName>
</protein>
<sequence>MILMITSTTDNLEGFKIVKYLGVVIGYGDDPDDALEDLIDVAEDMGANAVIGIRISNELTTEIISDENYAVPELTYYAYGTAVIVEKID</sequence>
<accession>Q58570</accession>
<evidence type="ECO:0000305" key="1"/>
<comment type="similarity">
    <text evidence="1">Belongs to the UPF0145 family. Highly divergent.</text>
</comment>